<reference key="1">
    <citation type="journal article" date="2006" name="Proc. Natl. Acad. Sci. U.S.A.">
        <title>Evolution of sensory complexity recorded in a myxobacterial genome.</title>
        <authorList>
            <person name="Goldman B.S."/>
            <person name="Nierman W.C."/>
            <person name="Kaiser D."/>
            <person name="Slater S.C."/>
            <person name="Durkin A.S."/>
            <person name="Eisen J.A."/>
            <person name="Ronning C.M."/>
            <person name="Barbazuk W.B."/>
            <person name="Blanchard M."/>
            <person name="Field C."/>
            <person name="Halling C."/>
            <person name="Hinkle G."/>
            <person name="Iartchuk O."/>
            <person name="Kim H.S."/>
            <person name="Mackenzie C."/>
            <person name="Madupu R."/>
            <person name="Miller N."/>
            <person name="Shvartsbeyn A."/>
            <person name="Sullivan S.A."/>
            <person name="Vaudin M."/>
            <person name="Wiegand R."/>
            <person name="Kaplan H.B."/>
        </authorList>
    </citation>
    <scope>NUCLEOTIDE SEQUENCE [LARGE SCALE GENOMIC DNA]</scope>
    <source>
        <strain>DK1622</strain>
    </source>
</reference>
<sequence length="303" mass="33217">MDSPYLEIEVPLSSPIHAFDFPQWHVPLKAGACAPRMTEHGEEIPGLMDGCLDLSITKHTVMMWLAALLLMATLFIWGNRDKTKLVPRGAGANILEMLVLFVRDELAIKNIGKEEGPRYVPFLLTVFFFILFMNMLGMVPWMATATGNLAVTMALALCTFVITQVAGIRAAGLGGYLKHLTGGVAPWLWPIMVPVEVLGLFTKPFALTMRLFANMLAGHIVYFFLLGLIFLLGHPAVAAVSVPFAFAIFLLELFVAFVQAYVFAMLSALFIGMSVAMGHHHDDHGHDHPEAGPSHDQGKAHHA</sequence>
<dbReference type="EMBL" id="CP000113">
    <property type="protein sequence ID" value="ABF87669.1"/>
    <property type="molecule type" value="Genomic_DNA"/>
</dbReference>
<dbReference type="SMR" id="Q1DFA0"/>
<dbReference type="STRING" id="246197.MXAN_0402"/>
<dbReference type="EnsemblBacteria" id="ABF87669">
    <property type="protein sequence ID" value="ABF87669"/>
    <property type="gene ID" value="MXAN_0402"/>
</dbReference>
<dbReference type="KEGG" id="mxa:MXAN_0402"/>
<dbReference type="eggNOG" id="COG0356">
    <property type="taxonomic scope" value="Bacteria"/>
</dbReference>
<dbReference type="HOGENOM" id="CLU_041018_0_0_7"/>
<dbReference type="Proteomes" id="UP000002402">
    <property type="component" value="Chromosome"/>
</dbReference>
<dbReference type="GO" id="GO:0005886">
    <property type="term" value="C:plasma membrane"/>
    <property type="evidence" value="ECO:0007669"/>
    <property type="project" value="UniProtKB-SubCell"/>
</dbReference>
<dbReference type="GO" id="GO:0045259">
    <property type="term" value="C:proton-transporting ATP synthase complex"/>
    <property type="evidence" value="ECO:0007669"/>
    <property type="project" value="UniProtKB-KW"/>
</dbReference>
<dbReference type="GO" id="GO:0046933">
    <property type="term" value="F:proton-transporting ATP synthase activity, rotational mechanism"/>
    <property type="evidence" value="ECO:0007669"/>
    <property type="project" value="UniProtKB-UniRule"/>
</dbReference>
<dbReference type="CDD" id="cd00310">
    <property type="entry name" value="ATP-synt_Fo_a_6"/>
    <property type="match status" value="1"/>
</dbReference>
<dbReference type="Gene3D" id="1.20.120.220">
    <property type="entry name" value="ATP synthase, F0 complex, subunit A"/>
    <property type="match status" value="1"/>
</dbReference>
<dbReference type="HAMAP" id="MF_01393">
    <property type="entry name" value="ATP_synth_a_bact"/>
    <property type="match status" value="1"/>
</dbReference>
<dbReference type="InterPro" id="IPR000568">
    <property type="entry name" value="ATP_synth_F0_asu"/>
</dbReference>
<dbReference type="InterPro" id="IPR023011">
    <property type="entry name" value="ATP_synth_F0_asu_AS"/>
</dbReference>
<dbReference type="InterPro" id="IPR045083">
    <property type="entry name" value="ATP_synth_F0_asu_bact/mt"/>
</dbReference>
<dbReference type="InterPro" id="IPR035908">
    <property type="entry name" value="F0_ATP_A_sf"/>
</dbReference>
<dbReference type="NCBIfam" id="TIGR01131">
    <property type="entry name" value="ATP_synt_6_or_A"/>
    <property type="match status" value="1"/>
</dbReference>
<dbReference type="PANTHER" id="PTHR11410">
    <property type="entry name" value="ATP SYNTHASE SUBUNIT A"/>
    <property type="match status" value="1"/>
</dbReference>
<dbReference type="PANTHER" id="PTHR11410:SF0">
    <property type="entry name" value="ATP SYNTHASE SUBUNIT A"/>
    <property type="match status" value="1"/>
</dbReference>
<dbReference type="Pfam" id="PF00119">
    <property type="entry name" value="ATP-synt_A"/>
    <property type="match status" value="1"/>
</dbReference>
<dbReference type="PRINTS" id="PR00123">
    <property type="entry name" value="ATPASEA"/>
</dbReference>
<dbReference type="SUPFAM" id="SSF81336">
    <property type="entry name" value="F1F0 ATP synthase subunit A"/>
    <property type="match status" value="1"/>
</dbReference>
<dbReference type="PROSITE" id="PS00449">
    <property type="entry name" value="ATPASE_A"/>
    <property type="match status" value="1"/>
</dbReference>
<gene>
    <name evidence="1" type="primary">atpB</name>
    <name type="ordered locus">MXAN_0402</name>
</gene>
<feature type="chain" id="PRO_0000362351" description="ATP synthase subunit a">
    <location>
        <begin position="1"/>
        <end position="303"/>
    </location>
</feature>
<feature type="transmembrane region" description="Helical" evidence="1">
    <location>
        <begin position="59"/>
        <end position="79"/>
    </location>
</feature>
<feature type="transmembrane region" description="Helical" evidence="1">
    <location>
        <begin position="122"/>
        <end position="142"/>
    </location>
</feature>
<feature type="transmembrane region" description="Helical" evidence="1">
    <location>
        <begin position="148"/>
        <end position="168"/>
    </location>
</feature>
<feature type="transmembrane region" description="Helical" evidence="1">
    <location>
        <begin position="181"/>
        <end position="201"/>
    </location>
</feature>
<feature type="transmembrane region" description="Helical" evidence="1">
    <location>
        <begin position="220"/>
        <end position="240"/>
    </location>
</feature>
<feature type="transmembrane region" description="Helical" evidence="1">
    <location>
        <begin position="244"/>
        <end position="264"/>
    </location>
</feature>
<feature type="region of interest" description="Disordered" evidence="2">
    <location>
        <begin position="281"/>
        <end position="303"/>
    </location>
</feature>
<feature type="compositionally biased region" description="Basic and acidic residues" evidence="2">
    <location>
        <begin position="281"/>
        <end position="290"/>
    </location>
</feature>
<proteinExistence type="inferred from homology"/>
<keyword id="KW-0066">ATP synthesis</keyword>
<keyword id="KW-0997">Cell inner membrane</keyword>
<keyword id="KW-1003">Cell membrane</keyword>
<keyword id="KW-0138">CF(0)</keyword>
<keyword id="KW-0375">Hydrogen ion transport</keyword>
<keyword id="KW-0406">Ion transport</keyword>
<keyword id="KW-0472">Membrane</keyword>
<keyword id="KW-1185">Reference proteome</keyword>
<keyword id="KW-0812">Transmembrane</keyword>
<keyword id="KW-1133">Transmembrane helix</keyword>
<keyword id="KW-0813">Transport</keyword>
<comment type="function">
    <text evidence="1">Key component of the proton channel; it plays a direct role in the translocation of protons across the membrane.</text>
</comment>
<comment type="subunit">
    <text evidence="1">F-type ATPases have 2 components, CF(1) - the catalytic core - and CF(0) - the membrane proton channel. CF(1) has five subunits: alpha(3), beta(3), gamma(1), delta(1), epsilon(1). CF(0) has three main subunits: a(1), b(2) and c(9-12). The alpha and beta chains form an alternating ring which encloses part of the gamma chain. CF(1) is attached to CF(0) by a central stalk formed by the gamma and epsilon chains, while a peripheral stalk is formed by the delta and b chains.</text>
</comment>
<comment type="subcellular location">
    <subcellularLocation>
        <location evidence="1">Cell inner membrane</location>
        <topology evidence="1">Multi-pass membrane protein</topology>
    </subcellularLocation>
</comment>
<comment type="similarity">
    <text evidence="1">Belongs to the ATPase A chain family.</text>
</comment>
<accession>Q1DFA0</accession>
<name>ATP6_MYXXD</name>
<protein>
    <recommendedName>
        <fullName evidence="1">ATP synthase subunit a</fullName>
    </recommendedName>
    <alternativeName>
        <fullName evidence="1">ATP synthase F0 sector subunit a</fullName>
    </alternativeName>
    <alternativeName>
        <fullName evidence="1">F-ATPase subunit 6</fullName>
    </alternativeName>
</protein>
<evidence type="ECO:0000255" key="1">
    <source>
        <dbReference type="HAMAP-Rule" id="MF_01393"/>
    </source>
</evidence>
<evidence type="ECO:0000256" key="2">
    <source>
        <dbReference type="SAM" id="MobiDB-lite"/>
    </source>
</evidence>
<organism>
    <name type="scientific">Myxococcus xanthus (strain DK1622)</name>
    <dbReference type="NCBI Taxonomy" id="246197"/>
    <lineage>
        <taxon>Bacteria</taxon>
        <taxon>Pseudomonadati</taxon>
        <taxon>Myxococcota</taxon>
        <taxon>Myxococcia</taxon>
        <taxon>Myxococcales</taxon>
        <taxon>Cystobacterineae</taxon>
        <taxon>Myxococcaceae</taxon>
        <taxon>Myxococcus</taxon>
    </lineage>
</organism>